<organism>
    <name type="scientific">Shewanella baltica (strain OS185)</name>
    <dbReference type="NCBI Taxonomy" id="402882"/>
    <lineage>
        <taxon>Bacteria</taxon>
        <taxon>Pseudomonadati</taxon>
        <taxon>Pseudomonadota</taxon>
        <taxon>Gammaproteobacteria</taxon>
        <taxon>Alteromonadales</taxon>
        <taxon>Shewanellaceae</taxon>
        <taxon>Shewanella</taxon>
    </lineage>
</organism>
<name>COBS_SHEB8</name>
<evidence type="ECO:0000255" key="1">
    <source>
        <dbReference type="HAMAP-Rule" id="MF_00719"/>
    </source>
</evidence>
<feature type="chain" id="PRO_1000045803" description="Adenosylcobinamide-GDP ribazoletransferase">
    <location>
        <begin position="1"/>
        <end position="262"/>
    </location>
</feature>
<feature type="transmembrane region" description="Helical" evidence="1">
    <location>
        <begin position="43"/>
        <end position="63"/>
    </location>
</feature>
<feature type="transmembrane region" description="Helical" evidence="1">
    <location>
        <begin position="66"/>
        <end position="86"/>
    </location>
</feature>
<feature type="transmembrane region" description="Helical" evidence="1">
    <location>
        <begin position="120"/>
        <end position="140"/>
    </location>
</feature>
<feature type="transmembrane region" description="Helical" evidence="1">
    <location>
        <begin position="146"/>
        <end position="166"/>
    </location>
</feature>
<feature type="transmembrane region" description="Helical" evidence="1">
    <location>
        <begin position="191"/>
        <end position="211"/>
    </location>
</feature>
<feature type="transmembrane region" description="Helical" evidence="1">
    <location>
        <begin position="242"/>
        <end position="262"/>
    </location>
</feature>
<keyword id="KW-0997">Cell inner membrane</keyword>
<keyword id="KW-1003">Cell membrane</keyword>
<keyword id="KW-0169">Cobalamin biosynthesis</keyword>
<keyword id="KW-0460">Magnesium</keyword>
<keyword id="KW-0472">Membrane</keyword>
<keyword id="KW-0808">Transferase</keyword>
<keyword id="KW-0812">Transmembrane</keyword>
<keyword id="KW-1133">Transmembrane helix</keyword>
<reference key="1">
    <citation type="submission" date="2007-07" db="EMBL/GenBank/DDBJ databases">
        <title>Complete sequence of chromosome of Shewanella baltica OS185.</title>
        <authorList>
            <consortium name="US DOE Joint Genome Institute"/>
            <person name="Copeland A."/>
            <person name="Lucas S."/>
            <person name="Lapidus A."/>
            <person name="Barry K."/>
            <person name="Glavina del Rio T."/>
            <person name="Dalin E."/>
            <person name="Tice H."/>
            <person name="Pitluck S."/>
            <person name="Sims D."/>
            <person name="Brettin T."/>
            <person name="Bruce D."/>
            <person name="Detter J.C."/>
            <person name="Han C."/>
            <person name="Schmutz J."/>
            <person name="Larimer F."/>
            <person name="Land M."/>
            <person name="Hauser L."/>
            <person name="Kyrpides N."/>
            <person name="Mikhailova N."/>
            <person name="Brettar I."/>
            <person name="Rodrigues J."/>
            <person name="Konstantinidis K."/>
            <person name="Tiedje J."/>
            <person name="Richardson P."/>
        </authorList>
    </citation>
    <scope>NUCLEOTIDE SEQUENCE [LARGE SCALE GENOMIC DNA]</scope>
    <source>
        <strain>OS185</strain>
    </source>
</reference>
<sequence length="262" mass="28659">MSERESWHKEIDLFLVAMGYFTRIPMPKWVEVDSDKLNKASRYFGLVGLLVGLLSAIVFWLTQNWLPAGVSVLLAMLVGVLLTGGFHEDGLADTFDGFGGGWTAEDKLRIMKDSRLGSYGALALILALLLKWQLLVELALYDPVVAGSALIVAHTVSRVVSASIIFSEKYVRDDETSKSKPLSQHQGINELLILIASGVLVLLFLKGLAALSLLLVMIGLRRLIIVIFRRQIGGYTGDTLGAAQQIAEIVCYFVLLVVGNIL</sequence>
<protein>
    <recommendedName>
        <fullName evidence="1">Adenosylcobinamide-GDP ribazoletransferase</fullName>
        <ecNumber evidence="1">2.7.8.26</ecNumber>
    </recommendedName>
    <alternativeName>
        <fullName evidence="1">Cobalamin synthase</fullName>
    </alternativeName>
    <alternativeName>
        <fullName evidence="1">Cobalamin-5'-phosphate synthase</fullName>
    </alternativeName>
</protein>
<comment type="function">
    <text evidence="1">Joins adenosylcobinamide-GDP and alpha-ribazole to generate adenosylcobalamin (Ado-cobalamin). Also synthesizes adenosylcobalamin 5'-phosphate from adenosylcobinamide-GDP and alpha-ribazole 5'-phosphate.</text>
</comment>
<comment type="catalytic activity">
    <reaction evidence="1">
        <text>alpha-ribazole + adenosylcob(III)inamide-GDP = adenosylcob(III)alamin + GMP + H(+)</text>
        <dbReference type="Rhea" id="RHEA:16049"/>
        <dbReference type="ChEBI" id="CHEBI:10329"/>
        <dbReference type="ChEBI" id="CHEBI:15378"/>
        <dbReference type="ChEBI" id="CHEBI:18408"/>
        <dbReference type="ChEBI" id="CHEBI:58115"/>
        <dbReference type="ChEBI" id="CHEBI:60487"/>
        <dbReference type="EC" id="2.7.8.26"/>
    </reaction>
</comment>
<comment type="catalytic activity">
    <reaction evidence="1">
        <text>alpha-ribazole 5'-phosphate + adenosylcob(III)inamide-GDP = adenosylcob(III)alamin 5'-phosphate + GMP + H(+)</text>
        <dbReference type="Rhea" id="RHEA:23560"/>
        <dbReference type="ChEBI" id="CHEBI:15378"/>
        <dbReference type="ChEBI" id="CHEBI:57918"/>
        <dbReference type="ChEBI" id="CHEBI:58115"/>
        <dbReference type="ChEBI" id="CHEBI:60487"/>
        <dbReference type="ChEBI" id="CHEBI:60493"/>
        <dbReference type="EC" id="2.7.8.26"/>
    </reaction>
</comment>
<comment type="cofactor">
    <cofactor evidence="1">
        <name>Mg(2+)</name>
        <dbReference type="ChEBI" id="CHEBI:18420"/>
    </cofactor>
</comment>
<comment type="pathway">
    <text evidence="1">Cofactor biosynthesis; adenosylcobalamin biosynthesis; adenosylcobalamin from cob(II)yrinate a,c-diamide: step 7/7.</text>
</comment>
<comment type="subcellular location">
    <subcellularLocation>
        <location evidence="1">Cell inner membrane</location>
        <topology evidence="1">Multi-pass membrane protein</topology>
    </subcellularLocation>
</comment>
<comment type="similarity">
    <text evidence="1">Belongs to the CobS family.</text>
</comment>
<gene>
    <name evidence="1" type="primary">cobS</name>
    <name type="ordered locus">Shew185_0978</name>
</gene>
<dbReference type="EC" id="2.7.8.26" evidence="1"/>
<dbReference type="EMBL" id="CP000753">
    <property type="protein sequence ID" value="ABS07131.1"/>
    <property type="molecule type" value="Genomic_DNA"/>
</dbReference>
<dbReference type="RefSeq" id="WP_012088426.1">
    <property type="nucleotide sequence ID" value="NC_009665.1"/>
</dbReference>
<dbReference type="KEGG" id="sbm:Shew185_0978"/>
<dbReference type="HOGENOM" id="CLU_057426_1_1_6"/>
<dbReference type="UniPathway" id="UPA00148">
    <property type="reaction ID" value="UER00238"/>
</dbReference>
<dbReference type="GO" id="GO:0005886">
    <property type="term" value="C:plasma membrane"/>
    <property type="evidence" value="ECO:0007669"/>
    <property type="project" value="UniProtKB-SubCell"/>
</dbReference>
<dbReference type="GO" id="GO:0051073">
    <property type="term" value="F:adenosylcobinamide-GDP ribazoletransferase activity"/>
    <property type="evidence" value="ECO:0007669"/>
    <property type="project" value="UniProtKB-UniRule"/>
</dbReference>
<dbReference type="GO" id="GO:0008818">
    <property type="term" value="F:cobalamin 5'-phosphate synthase activity"/>
    <property type="evidence" value="ECO:0007669"/>
    <property type="project" value="UniProtKB-UniRule"/>
</dbReference>
<dbReference type="GO" id="GO:0009236">
    <property type="term" value="P:cobalamin biosynthetic process"/>
    <property type="evidence" value="ECO:0007669"/>
    <property type="project" value="UniProtKB-UniRule"/>
</dbReference>
<dbReference type="HAMAP" id="MF_00719">
    <property type="entry name" value="CobS"/>
    <property type="match status" value="1"/>
</dbReference>
<dbReference type="InterPro" id="IPR003805">
    <property type="entry name" value="CobS"/>
</dbReference>
<dbReference type="NCBIfam" id="TIGR00317">
    <property type="entry name" value="cobS"/>
    <property type="match status" value="1"/>
</dbReference>
<dbReference type="NCBIfam" id="NF001277">
    <property type="entry name" value="PRK00235.1-3"/>
    <property type="match status" value="1"/>
</dbReference>
<dbReference type="PANTHER" id="PTHR34148">
    <property type="entry name" value="ADENOSYLCOBINAMIDE-GDP RIBAZOLETRANSFERASE"/>
    <property type="match status" value="1"/>
</dbReference>
<dbReference type="PANTHER" id="PTHR34148:SF1">
    <property type="entry name" value="ADENOSYLCOBINAMIDE-GDP RIBAZOLETRANSFERASE"/>
    <property type="match status" value="1"/>
</dbReference>
<dbReference type="Pfam" id="PF02654">
    <property type="entry name" value="CobS"/>
    <property type="match status" value="1"/>
</dbReference>
<accession>A6WJZ2</accession>
<proteinExistence type="inferred from homology"/>